<name>RL24_MYCPU</name>
<protein>
    <recommendedName>
        <fullName evidence="1">Large ribosomal subunit protein uL24</fullName>
    </recommendedName>
    <alternativeName>
        <fullName evidence="2">50S ribosomal protein L24</fullName>
    </alternativeName>
</protein>
<gene>
    <name evidence="1" type="primary">rplX</name>
    <name type="ordered locus">MYPU_5760</name>
</gene>
<keyword id="KW-1185">Reference proteome</keyword>
<keyword id="KW-0687">Ribonucleoprotein</keyword>
<keyword id="KW-0689">Ribosomal protein</keyword>
<keyword id="KW-0694">RNA-binding</keyword>
<keyword id="KW-0699">rRNA-binding</keyword>
<evidence type="ECO:0000255" key="1">
    <source>
        <dbReference type="HAMAP-Rule" id="MF_01326"/>
    </source>
</evidence>
<evidence type="ECO:0000305" key="2"/>
<comment type="function">
    <text evidence="1">One of two assembly initiator proteins, it binds directly to the 5'-end of the 23S rRNA, where it nucleates assembly of the 50S subunit.</text>
</comment>
<comment type="function">
    <text evidence="1">One of the proteins that surrounds the polypeptide exit tunnel on the outside of the subunit.</text>
</comment>
<comment type="subunit">
    <text evidence="1">Part of the 50S ribosomal subunit.</text>
</comment>
<comment type="similarity">
    <text evidence="1">Belongs to the universal ribosomal protein uL24 family.</text>
</comment>
<proteinExistence type="inferred from homology"/>
<feature type="chain" id="PRO_0000130683" description="Large ribosomal subunit protein uL24">
    <location>
        <begin position="1"/>
        <end position="108"/>
    </location>
</feature>
<accession>Q98PZ3</accession>
<sequence length="108" mass="11951">MKTKLRKNDEVIVIAGSYKGTKGTILKVLPKQQRVQVKGVNVVTKHVKPSQSNSEGSIQNFEAPIHISNVAYVHKSGPKDKSGIASKISYEKRKDKKVRIARKTGKVI</sequence>
<reference key="1">
    <citation type="journal article" date="2001" name="Nucleic Acids Res.">
        <title>The complete genome sequence of the murine respiratory pathogen Mycoplasma pulmonis.</title>
        <authorList>
            <person name="Chambaud I."/>
            <person name="Heilig R."/>
            <person name="Ferris S."/>
            <person name="Barbe V."/>
            <person name="Samson D."/>
            <person name="Galisson F."/>
            <person name="Moszer I."/>
            <person name="Dybvig K."/>
            <person name="Wroblewski H."/>
            <person name="Viari A."/>
            <person name="Rocha E.P.C."/>
            <person name="Blanchard A."/>
        </authorList>
    </citation>
    <scope>NUCLEOTIDE SEQUENCE [LARGE SCALE GENOMIC DNA]</scope>
    <source>
        <strain>UAB CTIP</strain>
    </source>
</reference>
<organism>
    <name type="scientific">Mycoplasmopsis pulmonis (strain UAB CTIP)</name>
    <name type="common">Mycoplasma pulmonis</name>
    <dbReference type="NCBI Taxonomy" id="272635"/>
    <lineage>
        <taxon>Bacteria</taxon>
        <taxon>Bacillati</taxon>
        <taxon>Mycoplasmatota</taxon>
        <taxon>Mycoplasmoidales</taxon>
        <taxon>Metamycoplasmataceae</taxon>
        <taxon>Mycoplasmopsis</taxon>
    </lineage>
</organism>
<dbReference type="EMBL" id="AL445565">
    <property type="protein sequence ID" value="CAC13749.1"/>
    <property type="molecule type" value="Genomic_DNA"/>
</dbReference>
<dbReference type="PIR" id="H90583">
    <property type="entry name" value="H90583"/>
</dbReference>
<dbReference type="RefSeq" id="WP_010925377.1">
    <property type="nucleotide sequence ID" value="NC_002771.1"/>
</dbReference>
<dbReference type="SMR" id="Q98PZ3"/>
<dbReference type="STRING" id="272635.gene:17577183"/>
<dbReference type="KEGG" id="mpu:MYPU_5760"/>
<dbReference type="eggNOG" id="COG0198">
    <property type="taxonomic scope" value="Bacteria"/>
</dbReference>
<dbReference type="HOGENOM" id="CLU_093315_2_2_14"/>
<dbReference type="BioCyc" id="MPUL272635:G1GT6-589-MONOMER"/>
<dbReference type="Proteomes" id="UP000000528">
    <property type="component" value="Chromosome"/>
</dbReference>
<dbReference type="GO" id="GO:1990904">
    <property type="term" value="C:ribonucleoprotein complex"/>
    <property type="evidence" value="ECO:0007669"/>
    <property type="project" value="UniProtKB-KW"/>
</dbReference>
<dbReference type="GO" id="GO:0005840">
    <property type="term" value="C:ribosome"/>
    <property type="evidence" value="ECO:0007669"/>
    <property type="project" value="UniProtKB-KW"/>
</dbReference>
<dbReference type="GO" id="GO:0019843">
    <property type="term" value="F:rRNA binding"/>
    <property type="evidence" value="ECO:0007669"/>
    <property type="project" value="UniProtKB-UniRule"/>
</dbReference>
<dbReference type="GO" id="GO:0003735">
    <property type="term" value="F:structural constituent of ribosome"/>
    <property type="evidence" value="ECO:0007669"/>
    <property type="project" value="InterPro"/>
</dbReference>
<dbReference type="GO" id="GO:0006412">
    <property type="term" value="P:translation"/>
    <property type="evidence" value="ECO:0007669"/>
    <property type="project" value="UniProtKB-UniRule"/>
</dbReference>
<dbReference type="CDD" id="cd06089">
    <property type="entry name" value="KOW_RPL26"/>
    <property type="match status" value="1"/>
</dbReference>
<dbReference type="Gene3D" id="2.30.30.30">
    <property type="match status" value="1"/>
</dbReference>
<dbReference type="HAMAP" id="MF_01326_B">
    <property type="entry name" value="Ribosomal_uL24_B"/>
    <property type="match status" value="1"/>
</dbReference>
<dbReference type="InterPro" id="IPR005824">
    <property type="entry name" value="KOW"/>
</dbReference>
<dbReference type="InterPro" id="IPR014722">
    <property type="entry name" value="Rib_uL2_dom2"/>
</dbReference>
<dbReference type="InterPro" id="IPR003256">
    <property type="entry name" value="Ribosomal_uL24"/>
</dbReference>
<dbReference type="InterPro" id="IPR005825">
    <property type="entry name" value="Ribosomal_uL24_CS"/>
</dbReference>
<dbReference type="InterPro" id="IPR041988">
    <property type="entry name" value="Ribosomal_uL24_KOW"/>
</dbReference>
<dbReference type="InterPro" id="IPR008991">
    <property type="entry name" value="Translation_prot_SH3-like_sf"/>
</dbReference>
<dbReference type="NCBIfam" id="TIGR01079">
    <property type="entry name" value="rplX_bact"/>
    <property type="match status" value="1"/>
</dbReference>
<dbReference type="PANTHER" id="PTHR12903">
    <property type="entry name" value="MITOCHONDRIAL RIBOSOMAL PROTEIN L24"/>
    <property type="match status" value="1"/>
</dbReference>
<dbReference type="Pfam" id="PF00467">
    <property type="entry name" value="KOW"/>
    <property type="match status" value="1"/>
</dbReference>
<dbReference type="Pfam" id="PF17136">
    <property type="entry name" value="ribosomal_L24"/>
    <property type="match status" value="1"/>
</dbReference>
<dbReference type="SMART" id="SM00739">
    <property type="entry name" value="KOW"/>
    <property type="match status" value="1"/>
</dbReference>
<dbReference type="SUPFAM" id="SSF50104">
    <property type="entry name" value="Translation proteins SH3-like domain"/>
    <property type="match status" value="1"/>
</dbReference>
<dbReference type="PROSITE" id="PS01108">
    <property type="entry name" value="RIBOSOMAL_L24"/>
    <property type="match status" value="1"/>
</dbReference>